<evidence type="ECO:0000255" key="1"/>
<evidence type="ECO:0000255" key="2">
    <source>
        <dbReference type="PROSITE-ProRule" id="PRU00286"/>
    </source>
</evidence>
<evidence type="ECO:0000256" key="3">
    <source>
        <dbReference type="SAM" id="MobiDB-lite"/>
    </source>
</evidence>
<evidence type="ECO:0000269" key="4">
    <source>
    </source>
</evidence>
<evidence type="ECO:0000269" key="5">
    <source>
    </source>
</evidence>
<evidence type="ECO:0000269" key="6">
    <source>
    </source>
</evidence>
<evidence type="ECO:0000269" key="7">
    <source>
    </source>
</evidence>
<evidence type="ECO:0000303" key="8">
    <source>
    </source>
</evidence>
<evidence type="ECO:0000303" key="9">
    <source>
    </source>
</evidence>
<evidence type="ECO:0000303" key="10">
    <source>
    </source>
</evidence>
<evidence type="ECO:0000305" key="11"/>
<evidence type="ECO:0000312" key="12">
    <source>
        <dbReference type="Araport" id="AT4G09350"/>
    </source>
</evidence>
<evidence type="ECO:0000312" key="13">
    <source>
        <dbReference type="EMBL" id="CAB55698.1"/>
    </source>
</evidence>
<organism>
    <name type="scientific">Arabidopsis thaliana</name>
    <name type="common">Mouse-ear cress</name>
    <dbReference type="NCBI Taxonomy" id="3702"/>
    <lineage>
        <taxon>Eukaryota</taxon>
        <taxon>Viridiplantae</taxon>
        <taxon>Streptophyta</taxon>
        <taxon>Embryophyta</taxon>
        <taxon>Tracheophyta</taxon>
        <taxon>Spermatophyta</taxon>
        <taxon>Magnoliopsida</taxon>
        <taxon>eudicotyledons</taxon>
        <taxon>Gunneridae</taxon>
        <taxon>Pentapetalae</taxon>
        <taxon>rosids</taxon>
        <taxon>malvids</taxon>
        <taxon>Brassicales</taxon>
        <taxon>Brassicaceae</taxon>
        <taxon>Camelineae</taxon>
        <taxon>Arabidopsis</taxon>
    </lineage>
</organism>
<name>NDHT_ARATH</name>
<protein>
    <recommendedName>
        <fullName evidence="11">NAD(P)H-quinone oxidoreductase subunit T, chloroplastic</fullName>
        <ecNumber evidence="11">7.1.1.-</ecNumber>
    </recommendedName>
    <alternativeName>
        <fullName evidence="10">DNA J PROTEIN C75</fullName>
    </alternativeName>
    <alternativeName>
        <fullName evidence="9">NAD(P)H dehydrogenase subunit T</fullName>
        <shortName evidence="11">NDH subunit T</shortName>
    </alternativeName>
    <alternativeName>
        <fullName evidence="11">NADH-plastoquinone oxidoreductase subunit T</fullName>
    </alternativeName>
    <alternativeName>
        <fullName evidence="8">Protein CHLORORESPIRATORY REDUCTION J</fullName>
    </alternativeName>
</protein>
<reference key="1">
    <citation type="journal article" date="1999" name="Nature">
        <title>Sequence and analysis of chromosome 4 of the plant Arabidopsis thaliana.</title>
        <authorList>
            <person name="Mayer K.F.X."/>
            <person name="Schueller C."/>
            <person name="Wambutt R."/>
            <person name="Murphy G."/>
            <person name="Volckaert G."/>
            <person name="Pohl T."/>
            <person name="Duesterhoeft A."/>
            <person name="Stiekema W."/>
            <person name="Entian K.-D."/>
            <person name="Terryn N."/>
            <person name="Harris B."/>
            <person name="Ansorge W."/>
            <person name="Brandt P."/>
            <person name="Grivell L.A."/>
            <person name="Rieger M."/>
            <person name="Weichselgartner M."/>
            <person name="de Simone V."/>
            <person name="Obermaier B."/>
            <person name="Mache R."/>
            <person name="Mueller M."/>
            <person name="Kreis M."/>
            <person name="Delseny M."/>
            <person name="Puigdomenech P."/>
            <person name="Watson M."/>
            <person name="Schmidtheini T."/>
            <person name="Reichert B."/>
            <person name="Portetelle D."/>
            <person name="Perez-Alonso M."/>
            <person name="Boutry M."/>
            <person name="Bancroft I."/>
            <person name="Vos P."/>
            <person name="Hoheisel J."/>
            <person name="Zimmermann W."/>
            <person name="Wedler H."/>
            <person name="Ridley P."/>
            <person name="Langham S.-A."/>
            <person name="McCullagh B."/>
            <person name="Bilham L."/>
            <person name="Robben J."/>
            <person name="van der Schueren J."/>
            <person name="Grymonprez B."/>
            <person name="Chuang Y.-J."/>
            <person name="Vandenbussche F."/>
            <person name="Braeken M."/>
            <person name="Weltjens I."/>
            <person name="Voet M."/>
            <person name="Bastiaens I."/>
            <person name="Aert R."/>
            <person name="Defoor E."/>
            <person name="Weitzenegger T."/>
            <person name="Bothe G."/>
            <person name="Ramsperger U."/>
            <person name="Hilbert H."/>
            <person name="Braun M."/>
            <person name="Holzer E."/>
            <person name="Brandt A."/>
            <person name="Peters S."/>
            <person name="van Staveren M."/>
            <person name="Dirkse W."/>
            <person name="Mooijman P."/>
            <person name="Klein Lankhorst R."/>
            <person name="Rose M."/>
            <person name="Hauf J."/>
            <person name="Koetter P."/>
            <person name="Berneiser S."/>
            <person name="Hempel S."/>
            <person name="Feldpausch M."/>
            <person name="Lamberth S."/>
            <person name="Van den Daele H."/>
            <person name="De Keyser A."/>
            <person name="Buysshaert C."/>
            <person name="Gielen J."/>
            <person name="Villarroel R."/>
            <person name="De Clercq R."/>
            <person name="van Montagu M."/>
            <person name="Rogers J."/>
            <person name="Cronin A."/>
            <person name="Quail M.A."/>
            <person name="Bray-Allen S."/>
            <person name="Clark L."/>
            <person name="Doggett J."/>
            <person name="Hall S."/>
            <person name="Kay M."/>
            <person name="Lennard N."/>
            <person name="McLay K."/>
            <person name="Mayes R."/>
            <person name="Pettett A."/>
            <person name="Rajandream M.A."/>
            <person name="Lyne M."/>
            <person name="Benes V."/>
            <person name="Rechmann S."/>
            <person name="Borkova D."/>
            <person name="Bloecker H."/>
            <person name="Scharfe M."/>
            <person name="Grimm M."/>
            <person name="Loehnert T.-H."/>
            <person name="Dose S."/>
            <person name="de Haan M."/>
            <person name="Maarse A.C."/>
            <person name="Schaefer M."/>
            <person name="Mueller-Auer S."/>
            <person name="Gabel C."/>
            <person name="Fuchs M."/>
            <person name="Fartmann B."/>
            <person name="Granderath K."/>
            <person name="Dauner D."/>
            <person name="Herzl A."/>
            <person name="Neumann S."/>
            <person name="Argiriou A."/>
            <person name="Vitale D."/>
            <person name="Liguori R."/>
            <person name="Piravandi E."/>
            <person name="Massenet O."/>
            <person name="Quigley F."/>
            <person name="Clabauld G."/>
            <person name="Muendlein A."/>
            <person name="Felber R."/>
            <person name="Schnabl S."/>
            <person name="Hiller R."/>
            <person name="Schmidt W."/>
            <person name="Lecharny A."/>
            <person name="Aubourg S."/>
            <person name="Chefdor F."/>
            <person name="Cooke R."/>
            <person name="Berger C."/>
            <person name="Monfort A."/>
            <person name="Casacuberta E."/>
            <person name="Gibbons T."/>
            <person name="Weber N."/>
            <person name="Vandenbol M."/>
            <person name="Bargues M."/>
            <person name="Terol J."/>
            <person name="Torres A."/>
            <person name="Perez-Perez A."/>
            <person name="Purnelle B."/>
            <person name="Bent E."/>
            <person name="Johnson S."/>
            <person name="Tacon D."/>
            <person name="Jesse T."/>
            <person name="Heijnen L."/>
            <person name="Schwarz S."/>
            <person name="Scholler P."/>
            <person name="Heber S."/>
            <person name="Francs P."/>
            <person name="Bielke C."/>
            <person name="Frishman D."/>
            <person name="Haase D."/>
            <person name="Lemcke K."/>
            <person name="Mewes H.-W."/>
            <person name="Stocker S."/>
            <person name="Zaccaria P."/>
            <person name="Bevan M."/>
            <person name="Wilson R.K."/>
            <person name="de la Bastide M."/>
            <person name="Habermann K."/>
            <person name="Parnell L."/>
            <person name="Dedhia N."/>
            <person name="Gnoj L."/>
            <person name="Schutz K."/>
            <person name="Huang E."/>
            <person name="Spiegel L."/>
            <person name="Sekhon M."/>
            <person name="Murray J."/>
            <person name="Sheet P."/>
            <person name="Cordes M."/>
            <person name="Abu-Threideh J."/>
            <person name="Stoneking T."/>
            <person name="Kalicki J."/>
            <person name="Graves T."/>
            <person name="Harmon G."/>
            <person name="Edwards J."/>
            <person name="Latreille P."/>
            <person name="Courtney L."/>
            <person name="Cloud J."/>
            <person name="Abbott A."/>
            <person name="Scott K."/>
            <person name="Johnson D."/>
            <person name="Minx P."/>
            <person name="Bentley D."/>
            <person name="Fulton B."/>
            <person name="Miller N."/>
            <person name="Greco T."/>
            <person name="Kemp K."/>
            <person name="Kramer J."/>
            <person name="Fulton L."/>
            <person name="Mardis E."/>
            <person name="Dante M."/>
            <person name="Pepin K."/>
            <person name="Hillier L.W."/>
            <person name="Nelson J."/>
            <person name="Spieth J."/>
            <person name="Ryan E."/>
            <person name="Andrews S."/>
            <person name="Geisel C."/>
            <person name="Layman D."/>
            <person name="Du H."/>
            <person name="Ali J."/>
            <person name="Berghoff A."/>
            <person name="Jones K."/>
            <person name="Drone K."/>
            <person name="Cotton M."/>
            <person name="Joshu C."/>
            <person name="Antonoiu B."/>
            <person name="Zidanic M."/>
            <person name="Strong C."/>
            <person name="Sun H."/>
            <person name="Lamar B."/>
            <person name="Yordan C."/>
            <person name="Ma P."/>
            <person name="Zhong J."/>
            <person name="Preston R."/>
            <person name="Vil D."/>
            <person name="Shekher M."/>
            <person name="Matero A."/>
            <person name="Shah R."/>
            <person name="Swaby I.K."/>
            <person name="O'Shaughnessy A."/>
            <person name="Rodriguez M."/>
            <person name="Hoffman J."/>
            <person name="Till S."/>
            <person name="Granat S."/>
            <person name="Shohdy N."/>
            <person name="Hasegawa A."/>
            <person name="Hameed A."/>
            <person name="Lodhi M."/>
            <person name="Johnson A."/>
            <person name="Chen E."/>
            <person name="Marra M.A."/>
            <person name="Martienssen R."/>
            <person name="McCombie W.R."/>
        </authorList>
    </citation>
    <scope>NUCLEOTIDE SEQUENCE [LARGE SCALE GENOMIC DNA]</scope>
    <source>
        <strain>cv. Columbia</strain>
    </source>
</reference>
<reference key="2">
    <citation type="journal article" date="2017" name="Plant J.">
        <title>Araport11: a complete reannotation of the Arabidopsis thaliana reference genome.</title>
        <authorList>
            <person name="Cheng C.Y."/>
            <person name="Krishnakumar V."/>
            <person name="Chan A.P."/>
            <person name="Thibaud-Nissen F."/>
            <person name="Schobel S."/>
            <person name="Town C.D."/>
        </authorList>
    </citation>
    <scope>GENOME REANNOTATION</scope>
    <source>
        <strain>cv. Columbia</strain>
    </source>
</reference>
<reference key="3">
    <citation type="journal article" date="2004" name="Genome Res.">
        <title>Whole genome sequence comparisons and 'full-length' cDNA sequences: a combined approach to evaluate and improve Arabidopsis genome annotation.</title>
        <authorList>
            <person name="Castelli V."/>
            <person name="Aury J.-M."/>
            <person name="Jaillon O."/>
            <person name="Wincker P."/>
            <person name="Clepet C."/>
            <person name="Menard M."/>
            <person name="Cruaud C."/>
            <person name="Quetier F."/>
            <person name="Scarpelli C."/>
            <person name="Schaechter V."/>
            <person name="Temple G."/>
            <person name="Caboche M."/>
            <person name="Weissenbach J."/>
            <person name="Salanoubat M."/>
        </authorList>
    </citation>
    <scope>NUCLEOTIDE SEQUENCE [LARGE SCALE MRNA] OF 2-249</scope>
    <source>
        <strain>cv. Columbia</strain>
    </source>
</reference>
<reference key="4">
    <citation type="submission" date="2004-09" db="EMBL/GenBank/DDBJ databases">
        <title>Large-scale analysis of RIKEN Arabidopsis full-length (RAFL) cDNAs.</title>
        <authorList>
            <person name="Totoki Y."/>
            <person name="Seki M."/>
            <person name="Ishida J."/>
            <person name="Nakajima M."/>
            <person name="Enju A."/>
            <person name="Kamiya A."/>
            <person name="Narusaka M."/>
            <person name="Shin-i T."/>
            <person name="Nakagawa M."/>
            <person name="Sakamoto N."/>
            <person name="Oishi K."/>
            <person name="Kohara Y."/>
            <person name="Kobayashi M."/>
            <person name="Toyoda A."/>
            <person name="Sakaki Y."/>
            <person name="Sakurai T."/>
            <person name="Iida K."/>
            <person name="Akiyama K."/>
            <person name="Satou M."/>
            <person name="Toyoda T."/>
            <person name="Konagaya A."/>
            <person name="Carninci P."/>
            <person name="Kawai J."/>
            <person name="Hayashizaki Y."/>
            <person name="Shinozaki K."/>
        </authorList>
    </citation>
    <scope>NUCLEOTIDE SEQUENCE [LARGE SCALE MRNA] OF 154-249</scope>
    <source>
        <strain>cv. Columbia</strain>
    </source>
</reference>
<reference key="5">
    <citation type="journal article" date="2011" name="Plant Cell">
        <title>An Src homology 3 domain-like fold protein forms a ferredoxin binding site for the chloroplast NADH dehydrogenase-like complex in Arabidopsis.</title>
        <authorList>
            <person name="Yamamoto H."/>
            <person name="Peng L."/>
            <person name="Fukao Y."/>
            <person name="Shikanai T."/>
        </authorList>
    </citation>
    <scope>COMPONENT OF THE NDH COMPLEX</scope>
    <scope>SUBUNIT</scope>
    <scope>DISRUPTION PHENOTYPE</scope>
    <scope>SUBCELLULAR LOCATION</scope>
    <scope>FUNCTION</scope>
</reference>
<reference key="6">
    <citation type="journal article" date="2011" name="Plant Cell Physiol.">
        <title>Structure of the chloroplast NADH dehydrogenase-like complex: nomenclature for nuclear-encoded subunits.</title>
        <authorList>
            <person name="Ifuku K."/>
            <person name="Endo T."/>
            <person name="Shikanai T."/>
            <person name="Aro E.M."/>
        </authorList>
    </citation>
    <scope>NOMENCLATURE</scope>
    <scope>COMPONENT OF THE NDH COMPLEX</scope>
</reference>
<reference key="7">
    <citation type="journal article" date="2013" name="J. Biol. Chem.">
        <title>In planta mutagenesis of Src homology 3 domain-like fold of NdhS, a ferredoxin-binding subunit of the chloroplast NADH dehydrogenase-like complex in Arabidopsis: a conserved Arg-193 plays a critical role in ferredoxin binding.</title>
        <authorList>
            <person name="Yamamoto H."/>
            <person name="Shikanai T."/>
        </authorList>
    </citation>
    <scope>COMPONENT OF THE NDH COMPLEX</scope>
    <scope>SUBUNIT</scope>
</reference>
<reference key="8">
    <citation type="journal article" date="2013" name="PLoS ONE">
        <title>Evolution of chloroplast J proteins.</title>
        <authorList>
            <person name="Chiu C.C."/>
            <person name="Chen L.J."/>
            <person name="Su P.H."/>
            <person name="Li H.M."/>
        </authorList>
    </citation>
    <scope>IDENTIFICATION</scope>
    <scope>NOMENCLATURE</scope>
    <scope>SUBCELLULAR LOCATION</scope>
</reference>
<accession>Q9SMS0</accession>
<accession>Q680H9</accession>
<dbReference type="EC" id="7.1.1.-" evidence="11"/>
<dbReference type="EMBL" id="AL117386">
    <property type="protein sequence ID" value="CAB55698.1"/>
    <property type="molecule type" value="Genomic_DNA"/>
</dbReference>
<dbReference type="EMBL" id="AL161514">
    <property type="protein sequence ID" value="CAB78058.1"/>
    <property type="molecule type" value="Genomic_DNA"/>
</dbReference>
<dbReference type="EMBL" id="CP002687">
    <property type="protein sequence ID" value="AEE82744.1"/>
    <property type="molecule type" value="Genomic_DNA"/>
</dbReference>
<dbReference type="EMBL" id="BX829231">
    <property type="status" value="NOT_ANNOTATED_CDS"/>
    <property type="molecule type" value="mRNA"/>
</dbReference>
<dbReference type="EMBL" id="AK175888">
    <property type="protein sequence ID" value="BAD43651.1"/>
    <property type="molecule type" value="mRNA"/>
</dbReference>
<dbReference type="PIR" id="T17134">
    <property type="entry name" value="T17134"/>
</dbReference>
<dbReference type="RefSeq" id="NP_192673.1">
    <property type="nucleotide sequence ID" value="NM_117003.3"/>
</dbReference>
<dbReference type="SMR" id="Q9SMS0"/>
<dbReference type="FunCoup" id="Q9SMS0">
    <property type="interactions" value="377"/>
</dbReference>
<dbReference type="STRING" id="3702.Q9SMS0"/>
<dbReference type="PaxDb" id="3702-AT4G09350.1"/>
<dbReference type="ProteomicsDB" id="251128"/>
<dbReference type="DNASU" id="826517"/>
<dbReference type="EnsemblPlants" id="AT4G09350.1">
    <property type="protein sequence ID" value="AT4G09350.1"/>
    <property type="gene ID" value="AT4G09350"/>
</dbReference>
<dbReference type="GeneID" id="826517"/>
<dbReference type="Gramene" id="AT4G09350.1">
    <property type="protein sequence ID" value="AT4G09350.1"/>
    <property type="gene ID" value="AT4G09350"/>
</dbReference>
<dbReference type="KEGG" id="ath:AT4G09350"/>
<dbReference type="Araport" id="AT4G09350"/>
<dbReference type="TAIR" id="AT4G09350">
    <property type="gene designation" value="NDHT"/>
</dbReference>
<dbReference type="eggNOG" id="KOG0715">
    <property type="taxonomic scope" value="Eukaryota"/>
</dbReference>
<dbReference type="HOGENOM" id="CLU_081125_0_0_1"/>
<dbReference type="InParanoid" id="Q9SMS0"/>
<dbReference type="OMA" id="KRRFYDW"/>
<dbReference type="PhylomeDB" id="Q9SMS0"/>
<dbReference type="PRO" id="PR:Q9SMS0"/>
<dbReference type="Proteomes" id="UP000006548">
    <property type="component" value="Chromosome 4"/>
</dbReference>
<dbReference type="ExpressionAtlas" id="Q9SMS0">
    <property type="expression patterns" value="baseline and differential"/>
</dbReference>
<dbReference type="GO" id="GO:0009507">
    <property type="term" value="C:chloroplast"/>
    <property type="evidence" value="ECO:0000314"/>
    <property type="project" value="TAIR"/>
</dbReference>
<dbReference type="GO" id="GO:0009535">
    <property type="term" value="C:chloroplast thylakoid membrane"/>
    <property type="evidence" value="ECO:0000315"/>
    <property type="project" value="UniProtKB"/>
</dbReference>
<dbReference type="GO" id="GO:0010598">
    <property type="term" value="C:NAD(P)H dehydrogenase complex (plastoquinone)"/>
    <property type="evidence" value="ECO:0000315"/>
    <property type="project" value="UniProtKB"/>
</dbReference>
<dbReference type="GO" id="GO:0048038">
    <property type="term" value="F:quinone binding"/>
    <property type="evidence" value="ECO:0007669"/>
    <property type="project" value="UniProtKB-KW"/>
</dbReference>
<dbReference type="CDD" id="cd06257">
    <property type="entry name" value="DnaJ"/>
    <property type="match status" value="1"/>
</dbReference>
<dbReference type="FunFam" id="1.10.287.110:FF:000087">
    <property type="entry name" value="DnaJ homolog subfamily C member 4"/>
    <property type="match status" value="1"/>
</dbReference>
<dbReference type="Gene3D" id="1.10.287.110">
    <property type="entry name" value="DnaJ domain"/>
    <property type="match status" value="1"/>
</dbReference>
<dbReference type="InterPro" id="IPR001623">
    <property type="entry name" value="DnaJ_domain"/>
</dbReference>
<dbReference type="InterPro" id="IPR018253">
    <property type="entry name" value="DnaJ_domain_CS"/>
</dbReference>
<dbReference type="InterPro" id="IPR036869">
    <property type="entry name" value="J_dom_sf"/>
</dbReference>
<dbReference type="InterPro" id="IPR044618">
    <property type="entry name" value="NdhT-like"/>
</dbReference>
<dbReference type="PANTHER" id="PTHR45283">
    <property type="entry name" value="NAD(P)H-QUINONE OXIDOREDUCTASE SUBUNIT T, CHLOROPLASTIC"/>
    <property type="match status" value="1"/>
</dbReference>
<dbReference type="PANTHER" id="PTHR45283:SF1">
    <property type="entry name" value="NAD(P)H-QUINONE OXIDOREDUCTASE SUBUNIT T, CHLOROPLASTIC"/>
    <property type="match status" value="1"/>
</dbReference>
<dbReference type="Pfam" id="PF00226">
    <property type="entry name" value="DnaJ"/>
    <property type="match status" value="1"/>
</dbReference>
<dbReference type="PRINTS" id="PR00625">
    <property type="entry name" value="JDOMAIN"/>
</dbReference>
<dbReference type="SMART" id="SM00271">
    <property type="entry name" value="DnaJ"/>
    <property type="match status" value="1"/>
</dbReference>
<dbReference type="SUPFAM" id="SSF46565">
    <property type="entry name" value="Chaperone J-domain"/>
    <property type="match status" value="1"/>
</dbReference>
<dbReference type="PROSITE" id="PS00636">
    <property type="entry name" value="DNAJ_1"/>
    <property type="match status" value="1"/>
</dbReference>
<dbReference type="PROSITE" id="PS50076">
    <property type="entry name" value="DNAJ_2"/>
    <property type="match status" value="1"/>
</dbReference>
<gene>
    <name evidence="9" type="primary">ndhT</name>
    <name evidence="8" type="synonym">CRRJ</name>
    <name evidence="10" type="synonym">DJC75</name>
    <name evidence="12" type="ordered locus">At4g09350</name>
    <name evidence="13" type="ORF">T30A10.110</name>
</gene>
<keyword id="KW-0143">Chaperone</keyword>
<keyword id="KW-0150">Chloroplast</keyword>
<keyword id="KW-0472">Membrane</keyword>
<keyword id="KW-0520">NAD</keyword>
<keyword id="KW-0521">NADP</keyword>
<keyword id="KW-0934">Plastid</keyword>
<keyword id="KW-0618">Plastoquinone</keyword>
<keyword id="KW-0874">Quinone</keyword>
<keyword id="KW-1185">Reference proteome</keyword>
<keyword id="KW-0793">Thylakoid</keyword>
<keyword id="KW-0809">Transit peptide</keyword>
<keyword id="KW-1278">Translocase</keyword>
<keyword id="KW-0812">Transmembrane</keyword>
<keyword id="KW-1133">Transmembrane helix</keyword>
<keyword id="KW-0813">Transport</keyword>
<sequence>MAYATSTYARTSCIILPKIQNGAHFTDDTKAFRRITARRVTRIYASQGPTKPSKPSPGVDTRIHWESPDEGWIGGRSDPAKSVDEDKTNLLSDEKFAELIKDSFDSHYQFLGVSTDADLEEIKSAYRRLSKEYHPDTTSLPLKTASEKFMKLREVYNVLSDEETRRFYDWTLAQEVASRQAEKMRMKLEDPKEQDFRGYESIPDMVDRLGGRNMELSDQAMTALTFDILIVLFAVCCIAFVIVFKDPSY</sequence>
<feature type="transit peptide" description="Chloroplast" evidence="11">
    <location>
        <begin position="1"/>
        <end position="45"/>
    </location>
</feature>
<feature type="chain" id="PRO_0000431816" description="NAD(P)H-quinone oxidoreductase subunit T, chloroplastic">
    <location>
        <begin position="46"/>
        <end position="249"/>
    </location>
</feature>
<feature type="transmembrane region" description="Helical" evidence="1">
    <location>
        <begin position="224"/>
        <end position="244"/>
    </location>
</feature>
<feature type="domain" description="J" evidence="2">
    <location>
        <begin position="106"/>
        <end position="172"/>
    </location>
</feature>
<feature type="region of interest" description="Disordered" evidence="3">
    <location>
        <begin position="44"/>
        <end position="84"/>
    </location>
</feature>
<feature type="sequence conflict" description="In Ref. 4; BAD43651." evidence="11" ref="4">
    <original>E</original>
    <variation>S</variation>
    <location>
        <position position="154"/>
    </location>
</feature>
<proteinExistence type="evidence at protein level"/>
<comment type="function">
    <text evidence="4 11">NDH shuttles electrons from NAD(P)H:plastoquinone, via FMN and iron-sulfur (Fe-S) centers, to quinones in the photosynthetic chain and possibly in a chloroplast respiratory chain. The immediate electron acceptor for the enzyme in this species is believed to be plastoquinone. Couples the redox reaction to proton translocation, and thus conserves the redox energy in a proton gradient (Probable). Required for the accumulation of both the NDH subcomplex A and NDHS (PubMed:21505067).</text>
</comment>
<comment type="catalytic activity">
    <reaction evidence="11">
        <text>a plastoquinone + NADH + (n+1) H(+)(in) = a plastoquinol + NAD(+) + n H(+)(out)</text>
        <dbReference type="Rhea" id="RHEA:42608"/>
        <dbReference type="Rhea" id="RHEA-COMP:9561"/>
        <dbReference type="Rhea" id="RHEA-COMP:9562"/>
        <dbReference type="ChEBI" id="CHEBI:15378"/>
        <dbReference type="ChEBI" id="CHEBI:17757"/>
        <dbReference type="ChEBI" id="CHEBI:57540"/>
        <dbReference type="ChEBI" id="CHEBI:57945"/>
        <dbReference type="ChEBI" id="CHEBI:62192"/>
    </reaction>
</comment>
<comment type="catalytic activity">
    <reaction evidence="11">
        <text>a plastoquinone + NADPH + (n+1) H(+)(in) = a plastoquinol + NADP(+) + n H(+)(out)</text>
        <dbReference type="Rhea" id="RHEA:42612"/>
        <dbReference type="Rhea" id="RHEA-COMP:9561"/>
        <dbReference type="Rhea" id="RHEA-COMP:9562"/>
        <dbReference type="ChEBI" id="CHEBI:15378"/>
        <dbReference type="ChEBI" id="CHEBI:17757"/>
        <dbReference type="ChEBI" id="CHEBI:57783"/>
        <dbReference type="ChEBI" id="CHEBI:58349"/>
        <dbReference type="ChEBI" id="CHEBI:62192"/>
    </reaction>
</comment>
<comment type="subunit">
    <text evidence="4 5 7">Part of the chloroplast NDH complex, composed of a mixture of chloroplast and nucleus encoded subunits (PubMed:21785130). Component of the electron donor-binding subcomplex, at least composed of NDHS, NDHT and NDHU (PubMed:21505067, PubMed:24225949).</text>
</comment>
<comment type="subcellular location">
    <subcellularLocation>
        <location evidence="4 6">Plastid</location>
        <location evidence="4 6">Chloroplast thylakoid membrane</location>
        <topology evidence="1">Single-pass membrane protein</topology>
    </subcellularLocation>
</comment>
<comment type="disruption phenotype">
    <text evidence="4">Malfunction of the NDH complex.</text>
</comment>